<protein>
    <recommendedName>
        <fullName evidence="1">Gamma-glutamyl phosphate reductase</fullName>
        <shortName evidence="1">GPR</shortName>
        <ecNumber evidence="1">1.2.1.41</ecNumber>
    </recommendedName>
    <alternativeName>
        <fullName evidence="1">Glutamate-5-semialdehyde dehydrogenase</fullName>
    </alternativeName>
    <alternativeName>
        <fullName evidence="1">Glutamyl-gamma-semialdehyde dehydrogenase</fullName>
        <shortName evidence="1">GSA dehydrogenase</shortName>
    </alternativeName>
</protein>
<dbReference type="EC" id="1.2.1.41" evidence="1"/>
<dbReference type="EMBL" id="CP000673">
    <property type="protein sequence ID" value="EDK34747.1"/>
    <property type="molecule type" value="Genomic_DNA"/>
</dbReference>
<dbReference type="RefSeq" id="WP_012103077.1">
    <property type="nucleotide sequence ID" value="NC_009706.1"/>
</dbReference>
<dbReference type="SMR" id="A5N0V1"/>
<dbReference type="STRING" id="431943.CKL_2735"/>
<dbReference type="KEGG" id="ckl:CKL_2735"/>
<dbReference type="eggNOG" id="COG0014">
    <property type="taxonomic scope" value="Bacteria"/>
</dbReference>
<dbReference type="HOGENOM" id="CLU_030231_0_0_9"/>
<dbReference type="UniPathway" id="UPA00098">
    <property type="reaction ID" value="UER00360"/>
</dbReference>
<dbReference type="Proteomes" id="UP000002411">
    <property type="component" value="Chromosome"/>
</dbReference>
<dbReference type="GO" id="GO:0005737">
    <property type="term" value="C:cytoplasm"/>
    <property type="evidence" value="ECO:0007669"/>
    <property type="project" value="UniProtKB-SubCell"/>
</dbReference>
<dbReference type="GO" id="GO:0004350">
    <property type="term" value="F:glutamate-5-semialdehyde dehydrogenase activity"/>
    <property type="evidence" value="ECO:0007669"/>
    <property type="project" value="UniProtKB-UniRule"/>
</dbReference>
<dbReference type="GO" id="GO:0050661">
    <property type="term" value="F:NADP binding"/>
    <property type="evidence" value="ECO:0007669"/>
    <property type="project" value="InterPro"/>
</dbReference>
<dbReference type="GO" id="GO:0055129">
    <property type="term" value="P:L-proline biosynthetic process"/>
    <property type="evidence" value="ECO:0007669"/>
    <property type="project" value="UniProtKB-UniRule"/>
</dbReference>
<dbReference type="CDD" id="cd07079">
    <property type="entry name" value="ALDH_F18-19_ProA-GPR"/>
    <property type="match status" value="1"/>
</dbReference>
<dbReference type="FunFam" id="3.40.309.10:FF:000006">
    <property type="entry name" value="Gamma-glutamyl phosphate reductase"/>
    <property type="match status" value="1"/>
</dbReference>
<dbReference type="Gene3D" id="3.40.605.10">
    <property type="entry name" value="Aldehyde Dehydrogenase, Chain A, domain 1"/>
    <property type="match status" value="1"/>
</dbReference>
<dbReference type="Gene3D" id="3.40.309.10">
    <property type="entry name" value="Aldehyde Dehydrogenase, Chain A, domain 2"/>
    <property type="match status" value="1"/>
</dbReference>
<dbReference type="HAMAP" id="MF_00412">
    <property type="entry name" value="ProA"/>
    <property type="match status" value="1"/>
</dbReference>
<dbReference type="InterPro" id="IPR016161">
    <property type="entry name" value="Ald_DH/histidinol_DH"/>
</dbReference>
<dbReference type="InterPro" id="IPR016163">
    <property type="entry name" value="Ald_DH_C"/>
</dbReference>
<dbReference type="InterPro" id="IPR016162">
    <property type="entry name" value="Ald_DH_N"/>
</dbReference>
<dbReference type="InterPro" id="IPR015590">
    <property type="entry name" value="Aldehyde_DH_dom"/>
</dbReference>
<dbReference type="InterPro" id="IPR020593">
    <property type="entry name" value="G-glutamylP_reductase_CS"/>
</dbReference>
<dbReference type="InterPro" id="IPR012134">
    <property type="entry name" value="Glu-5-SA_DH"/>
</dbReference>
<dbReference type="InterPro" id="IPR000965">
    <property type="entry name" value="GPR_dom"/>
</dbReference>
<dbReference type="NCBIfam" id="NF001221">
    <property type="entry name" value="PRK00197.1"/>
    <property type="match status" value="1"/>
</dbReference>
<dbReference type="NCBIfam" id="TIGR00407">
    <property type="entry name" value="proA"/>
    <property type="match status" value="1"/>
</dbReference>
<dbReference type="PANTHER" id="PTHR11063:SF8">
    <property type="entry name" value="DELTA-1-PYRROLINE-5-CARBOXYLATE SYNTHASE"/>
    <property type="match status" value="1"/>
</dbReference>
<dbReference type="PANTHER" id="PTHR11063">
    <property type="entry name" value="GLUTAMATE SEMIALDEHYDE DEHYDROGENASE"/>
    <property type="match status" value="1"/>
</dbReference>
<dbReference type="Pfam" id="PF00171">
    <property type="entry name" value="Aldedh"/>
    <property type="match status" value="1"/>
</dbReference>
<dbReference type="PIRSF" id="PIRSF000151">
    <property type="entry name" value="GPR"/>
    <property type="match status" value="1"/>
</dbReference>
<dbReference type="SUPFAM" id="SSF53720">
    <property type="entry name" value="ALDH-like"/>
    <property type="match status" value="1"/>
</dbReference>
<dbReference type="PROSITE" id="PS01223">
    <property type="entry name" value="PROA"/>
    <property type="match status" value="1"/>
</dbReference>
<sequence>MDIYDCILEKAKNANRAARTLSNMSTDIKNAALIKMAEELNKNKDDILKANMLDLEDAKSSGKNDAFIDRLTLNENRIESMASGLMKVASLPDPIGEVTRMWKKSNELNIGRVRVPLGTIGIIYEARPNVTVDAAALCVKSGNSVILKGGKEAINSNLAIYNAINKGAIEAGLPAGTIEFINMTERKAVEVLMKLNEYVDVLIPRGGSGLIKSVVENSTVPVIETGIGNCHVYVDSSADLTMAENIVINAKTQRPGVCNAMETLLVHEAVAEKLIPHLTETLSKMGVEIRGCLKTKRLIPDIRLATAEDYAQEFLDLILAVKVVSSLDEALDHIYKYGTKHSEAIITNDYTSSQRFLREVDAAAVYVNASTRFTDGEEFGFGAEIGISTQKLHARGPMGLNELTTIKYIVYGEGQIRE</sequence>
<evidence type="ECO:0000255" key="1">
    <source>
        <dbReference type="HAMAP-Rule" id="MF_00412"/>
    </source>
</evidence>
<proteinExistence type="inferred from homology"/>
<accession>A5N0V1</accession>
<name>PROA_CLOK5</name>
<keyword id="KW-0028">Amino-acid biosynthesis</keyword>
<keyword id="KW-0963">Cytoplasm</keyword>
<keyword id="KW-0521">NADP</keyword>
<keyword id="KW-0560">Oxidoreductase</keyword>
<keyword id="KW-0641">Proline biosynthesis</keyword>
<keyword id="KW-1185">Reference proteome</keyword>
<reference key="1">
    <citation type="journal article" date="2008" name="Proc. Natl. Acad. Sci. U.S.A.">
        <title>The genome of Clostridium kluyveri, a strict anaerobe with unique metabolic features.</title>
        <authorList>
            <person name="Seedorf H."/>
            <person name="Fricke W.F."/>
            <person name="Veith B."/>
            <person name="Brueggemann H."/>
            <person name="Liesegang H."/>
            <person name="Strittmatter A."/>
            <person name="Miethke M."/>
            <person name="Buckel W."/>
            <person name="Hinderberger J."/>
            <person name="Li F."/>
            <person name="Hagemeier C."/>
            <person name="Thauer R.K."/>
            <person name="Gottschalk G."/>
        </authorList>
    </citation>
    <scope>NUCLEOTIDE SEQUENCE [LARGE SCALE GENOMIC DNA]</scope>
    <source>
        <strain>ATCC 8527 / DSM 555 / NBRC 12016 / NCIMB 10680 / K1</strain>
    </source>
</reference>
<comment type="function">
    <text evidence="1">Catalyzes the NADPH-dependent reduction of L-glutamate 5-phosphate into L-glutamate 5-semialdehyde and phosphate. The product spontaneously undergoes cyclization to form 1-pyrroline-5-carboxylate.</text>
</comment>
<comment type="catalytic activity">
    <reaction evidence="1">
        <text>L-glutamate 5-semialdehyde + phosphate + NADP(+) = L-glutamyl 5-phosphate + NADPH + H(+)</text>
        <dbReference type="Rhea" id="RHEA:19541"/>
        <dbReference type="ChEBI" id="CHEBI:15378"/>
        <dbReference type="ChEBI" id="CHEBI:43474"/>
        <dbReference type="ChEBI" id="CHEBI:57783"/>
        <dbReference type="ChEBI" id="CHEBI:58066"/>
        <dbReference type="ChEBI" id="CHEBI:58274"/>
        <dbReference type="ChEBI" id="CHEBI:58349"/>
        <dbReference type="EC" id="1.2.1.41"/>
    </reaction>
</comment>
<comment type="pathway">
    <text evidence="1">Amino-acid biosynthesis; L-proline biosynthesis; L-glutamate 5-semialdehyde from L-glutamate: step 2/2.</text>
</comment>
<comment type="subcellular location">
    <subcellularLocation>
        <location evidence="1">Cytoplasm</location>
    </subcellularLocation>
</comment>
<comment type="similarity">
    <text evidence="1">Belongs to the gamma-glutamyl phosphate reductase family.</text>
</comment>
<organism>
    <name type="scientific">Clostridium kluyveri (strain ATCC 8527 / DSM 555 / NBRC 12016 / NCIMB 10680 / K1)</name>
    <dbReference type="NCBI Taxonomy" id="431943"/>
    <lineage>
        <taxon>Bacteria</taxon>
        <taxon>Bacillati</taxon>
        <taxon>Bacillota</taxon>
        <taxon>Clostridia</taxon>
        <taxon>Eubacteriales</taxon>
        <taxon>Clostridiaceae</taxon>
        <taxon>Clostridium</taxon>
    </lineage>
</organism>
<gene>
    <name evidence="1" type="primary">proA</name>
    <name type="ordered locus">CKL_2735</name>
</gene>
<feature type="chain" id="PRO_1000080479" description="Gamma-glutamyl phosphate reductase">
    <location>
        <begin position="1"/>
        <end position="418"/>
    </location>
</feature>